<sequence length="13" mass="1515">QAIVSKARRPYIL</sequence>
<protein>
    <recommendedName>
        <fullName>Neurotensin</fullName>
        <shortName>NT</shortName>
    </recommendedName>
</protein>
<name>NEUT_RHIMB</name>
<dbReference type="GO" id="GO:0005576">
    <property type="term" value="C:extracellular region"/>
    <property type="evidence" value="ECO:0007669"/>
    <property type="project" value="UniProtKB-SubCell"/>
</dbReference>
<dbReference type="GO" id="GO:0097746">
    <property type="term" value="P:blood vessel diameter maintenance"/>
    <property type="evidence" value="ECO:0007669"/>
    <property type="project" value="UniProtKB-KW"/>
</dbReference>
<comment type="function">
    <text>Smooth muscle-contracting peptide. Peptide action is not affected by tetrodotoxin, but is slightly mediated through the release of acetylcholine.</text>
</comment>
<comment type="subcellular location">
    <subcellularLocation>
        <location>Secreted</location>
    </subcellularLocation>
</comment>
<comment type="similarity">
    <text evidence="2">Belongs to the neurotensin family.</text>
</comment>
<organism>
    <name type="scientific">Rhinella marina</name>
    <name type="common">Cane toad</name>
    <name type="synonym">Bufo marinus</name>
    <dbReference type="NCBI Taxonomy" id="8386"/>
    <lineage>
        <taxon>Eukaryota</taxon>
        <taxon>Metazoa</taxon>
        <taxon>Chordata</taxon>
        <taxon>Craniata</taxon>
        <taxon>Vertebrata</taxon>
        <taxon>Euteleostomi</taxon>
        <taxon>Amphibia</taxon>
        <taxon>Batrachia</taxon>
        <taxon>Anura</taxon>
        <taxon>Neobatrachia</taxon>
        <taxon>Hyloidea</taxon>
        <taxon>Bufonidae</taxon>
        <taxon>Rhinella</taxon>
    </lineage>
</organism>
<keyword id="KW-0903">Direct protein sequencing</keyword>
<keyword id="KW-0873">Pyrrolidone carboxylic acid</keyword>
<keyword id="KW-0964">Secreted</keyword>
<keyword id="KW-0838">Vasoactive</keyword>
<accession>P81796</accession>
<feature type="peptide" id="PRO_0000044070" description="Neurotensin">
    <location>
        <begin position="1"/>
        <end position="13"/>
    </location>
</feature>
<feature type="modified residue" description="Pyrrolidone carboxylic acid" evidence="1">
    <location>
        <position position="1"/>
    </location>
</feature>
<evidence type="ECO:0000269" key="1">
    <source>
    </source>
</evidence>
<evidence type="ECO:0000305" key="2"/>
<proteinExistence type="evidence at protein level"/>
<reference key="1">
    <citation type="journal article" date="1998" name="Peptides">
        <title>Purification, characterization, and spasmogenic activity of neurotensin from the toad Bufo marinus.</title>
        <authorList>
            <person name="Warner F.J."/>
            <person name="Burcher E."/>
            <person name="Carraway R."/>
            <person name="Conlon J.M."/>
        </authorList>
    </citation>
    <scope>PROTEIN SEQUENCE</scope>
    <scope>PYROGLUTAMATE FORMATION AT GLN-1</scope>
    <scope>SYNTHESIS</scope>
    <source>
        <tissue>Small intestine</tissue>
    </source>
</reference>